<protein>
    <recommendedName>
        <fullName evidence="1">UPF0391 membrane protein YtjA</fullName>
    </recommendedName>
</protein>
<name>YTJA_SALSV</name>
<gene>
    <name evidence="1" type="primary">ytjA</name>
    <name type="ordered locus">SeSA_A4816</name>
</gene>
<comment type="subcellular location">
    <subcellularLocation>
        <location evidence="1">Cell membrane</location>
        <topology evidence="1">Multi-pass membrane protein</topology>
    </subcellularLocation>
</comment>
<comment type="similarity">
    <text evidence="1">Belongs to the UPF0391 family.</text>
</comment>
<feature type="chain" id="PRO_1000143725" description="UPF0391 membrane protein YtjA">
    <location>
        <begin position="1"/>
        <end position="53"/>
    </location>
</feature>
<feature type="transmembrane region" description="Helical" evidence="1">
    <location>
        <begin position="4"/>
        <end position="24"/>
    </location>
</feature>
<feature type="transmembrane region" description="Helical" evidence="1">
    <location>
        <begin position="30"/>
        <end position="48"/>
    </location>
</feature>
<evidence type="ECO:0000255" key="1">
    <source>
        <dbReference type="HAMAP-Rule" id="MF_01361"/>
    </source>
</evidence>
<dbReference type="EMBL" id="CP001127">
    <property type="protein sequence ID" value="ACF91190.1"/>
    <property type="molecule type" value="Genomic_DNA"/>
</dbReference>
<dbReference type="RefSeq" id="WP_000490276.1">
    <property type="nucleotide sequence ID" value="NC_011094.1"/>
</dbReference>
<dbReference type="KEGG" id="sew:SeSA_A4816"/>
<dbReference type="HOGENOM" id="CLU_187346_2_0_6"/>
<dbReference type="Proteomes" id="UP000001865">
    <property type="component" value="Chromosome"/>
</dbReference>
<dbReference type="GO" id="GO:0005886">
    <property type="term" value="C:plasma membrane"/>
    <property type="evidence" value="ECO:0007669"/>
    <property type="project" value="UniProtKB-SubCell"/>
</dbReference>
<dbReference type="HAMAP" id="MF_01361">
    <property type="entry name" value="UPF0391"/>
    <property type="match status" value="1"/>
</dbReference>
<dbReference type="InterPro" id="IPR009760">
    <property type="entry name" value="DUF1328"/>
</dbReference>
<dbReference type="NCBIfam" id="NF010229">
    <property type="entry name" value="PRK13682.1-4"/>
    <property type="match status" value="1"/>
</dbReference>
<dbReference type="NCBIfam" id="NF010230">
    <property type="entry name" value="PRK13682.1-5"/>
    <property type="match status" value="1"/>
</dbReference>
<dbReference type="Pfam" id="PF07043">
    <property type="entry name" value="DUF1328"/>
    <property type="match status" value="1"/>
</dbReference>
<dbReference type="PIRSF" id="PIRSF036466">
    <property type="entry name" value="UCP036466"/>
    <property type="match status" value="1"/>
</dbReference>
<keyword id="KW-1003">Cell membrane</keyword>
<keyword id="KW-0472">Membrane</keyword>
<keyword id="KW-0812">Transmembrane</keyword>
<keyword id="KW-1133">Transmembrane helix</keyword>
<organism>
    <name type="scientific">Salmonella schwarzengrund (strain CVM19633)</name>
    <dbReference type="NCBI Taxonomy" id="439843"/>
    <lineage>
        <taxon>Bacteria</taxon>
        <taxon>Pseudomonadati</taxon>
        <taxon>Pseudomonadota</taxon>
        <taxon>Gammaproteobacteria</taxon>
        <taxon>Enterobacterales</taxon>
        <taxon>Enterobacteriaceae</taxon>
        <taxon>Salmonella</taxon>
    </lineage>
</organism>
<sequence>MFRWGIIFLVIALIAAALGFGGLAGTAAGAAKIVFVVGIVLFLVSLFMGRKRP</sequence>
<reference key="1">
    <citation type="journal article" date="2011" name="J. Bacteriol.">
        <title>Comparative genomics of 28 Salmonella enterica isolates: evidence for CRISPR-mediated adaptive sublineage evolution.</title>
        <authorList>
            <person name="Fricke W.F."/>
            <person name="Mammel M.K."/>
            <person name="McDermott P.F."/>
            <person name="Tartera C."/>
            <person name="White D.G."/>
            <person name="Leclerc J.E."/>
            <person name="Ravel J."/>
            <person name="Cebula T.A."/>
        </authorList>
    </citation>
    <scope>NUCLEOTIDE SEQUENCE [LARGE SCALE GENOMIC DNA]</scope>
    <source>
        <strain>CVM19633</strain>
    </source>
</reference>
<accession>B4TU36</accession>
<proteinExistence type="inferred from homology"/>